<dbReference type="EMBL" id="AC012329">
    <property type="protein sequence ID" value="AAG52186.1"/>
    <property type="molecule type" value="Genomic_DNA"/>
</dbReference>
<dbReference type="EMBL" id="AL132964">
    <property type="protein sequence ID" value="CAB62455.1"/>
    <property type="status" value="ALT_SEQ"/>
    <property type="molecule type" value="Genomic_DNA"/>
</dbReference>
<dbReference type="EMBL" id="CP002686">
    <property type="protein sequence ID" value="AEE78551.2"/>
    <property type="molecule type" value="Genomic_DNA"/>
</dbReference>
<dbReference type="EMBL" id="BT010151">
    <property type="protein sequence ID" value="AAQ22620.1"/>
    <property type="molecule type" value="mRNA"/>
</dbReference>
<dbReference type="EMBL" id="AK227840">
    <property type="protein sequence ID" value="BAE99818.1"/>
    <property type="molecule type" value="mRNA"/>
</dbReference>
<dbReference type="PIR" id="T46228">
    <property type="entry name" value="T46228"/>
</dbReference>
<dbReference type="RefSeq" id="NP_190520.2">
    <property type="nucleotide sequence ID" value="NM_114811.3"/>
</dbReference>
<dbReference type="FunCoup" id="Q9CA02">
    <property type="interactions" value="5"/>
</dbReference>
<dbReference type="STRING" id="3702.Q9CA02"/>
<dbReference type="PaxDb" id="3702-AT3G49510.1"/>
<dbReference type="ProteomicsDB" id="230636"/>
<dbReference type="EnsemblPlants" id="AT3G49510.1">
    <property type="protein sequence ID" value="AT3G49510.1"/>
    <property type="gene ID" value="AT3G49510"/>
</dbReference>
<dbReference type="GeneID" id="824113"/>
<dbReference type="Gramene" id="AT3G49510.1">
    <property type="protein sequence ID" value="AT3G49510.1"/>
    <property type="gene ID" value="AT3G49510"/>
</dbReference>
<dbReference type="KEGG" id="ath:AT3G49510"/>
<dbReference type="Araport" id="AT3G49510"/>
<dbReference type="TAIR" id="AT3G49510"/>
<dbReference type="HOGENOM" id="CLU_415254_0_0_1"/>
<dbReference type="InParanoid" id="Q9CA02"/>
<dbReference type="OMA" id="FSVCSMK"/>
<dbReference type="PhylomeDB" id="Q9CA02"/>
<dbReference type="PRO" id="PR:Q9CA02"/>
<dbReference type="Proteomes" id="UP000006548">
    <property type="component" value="Chromosome 3"/>
</dbReference>
<dbReference type="ExpressionAtlas" id="Q9CA02">
    <property type="expression patterns" value="baseline and differential"/>
</dbReference>
<dbReference type="CDD" id="cd22157">
    <property type="entry name" value="F-box_AtFBW1-like"/>
    <property type="match status" value="1"/>
</dbReference>
<dbReference type="Gene3D" id="1.20.1280.50">
    <property type="match status" value="1"/>
</dbReference>
<dbReference type="InterPro" id="IPR006527">
    <property type="entry name" value="F-box-assoc_dom_typ1"/>
</dbReference>
<dbReference type="InterPro" id="IPR017451">
    <property type="entry name" value="F-box-assoc_interact_dom"/>
</dbReference>
<dbReference type="InterPro" id="IPR036047">
    <property type="entry name" value="F-box-like_dom_sf"/>
</dbReference>
<dbReference type="InterPro" id="IPR001810">
    <property type="entry name" value="F-box_dom"/>
</dbReference>
<dbReference type="InterPro" id="IPR011043">
    <property type="entry name" value="Gal_Oxase/kelch_b-propeller"/>
</dbReference>
<dbReference type="InterPro" id="IPR050796">
    <property type="entry name" value="SCF_F-box_component"/>
</dbReference>
<dbReference type="NCBIfam" id="TIGR01640">
    <property type="entry name" value="F_box_assoc_1"/>
    <property type="match status" value="1"/>
</dbReference>
<dbReference type="PANTHER" id="PTHR31672">
    <property type="entry name" value="BNACNNG10540D PROTEIN"/>
    <property type="match status" value="1"/>
</dbReference>
<dbReference type="PANTHER" id="PTHR31672:SF10">
    <property type="entry name" value="F-BOX DOMAIN-CONTAINING PROTEIN"/>
    <property type="match status" value="1"/>
</dbReference>
<dbReference type="Pfam" id="PF00646">
    <property type="entry name" value="F-box"/>
    <property type="match status" value="1"/>
</dbReference>
<dbReference type="Pfam" id="PF07734">
    <property type="entry name" value="FBA_1"/>
    <property type="match status" value="1"/>
</dbReference>
<dbReference type="SMART" id="SM00256">
    <property type="entry name" value="FBOX"/>
    <property type="match status" value="1"/>
</dbReference>
<dbReference type="SUPFAM" id="SSF81383">
    <property type="entry name" value="F-box domain"/>
    <property type="match status" value="1"/>
</dbReference>
<dbReference type="SUPFAM" id="SSF50965">
    <property type="entry name" value="Galactose oxidase, central domain"/>
    <property type="match status" value="1"/>
</dbReference>
<dbReference type="PROSITE" id="PS50181">
    <property type="entry name" value="FBOX"/>
    <property type="match status" value="1"/>
</dbReference>
<accession>Q9CA02</accession>
<accession>F4IXY6</accession>
<accession>Q9SCK8</accession>
<gene>
    <name type="ordered locus">At3g49510</name>
    <name type="ORF">T1G12.21</name>
    <name type="ORF">T9C5.100</name>
</gene>
<protein>
    <recommendedName>
        <fullName>F-box protein At3g49510</fullName>
    </recommendedName>
</protein>
<name>FB198_ARATH</name>
<sequence length="388" mass="44766">MTTISDLSDDLVGDILSRVPFTSLISVRSTCKKWNALSKNQIFGRKTAARNQFLEFMILDSRVCSLRLDLQGIRNEDKEDFVDPSMKLISIPSNDDQVEISQVYHCDGLLLCIAKENSNVFVWNPYLGQTKWIRPRNTFHRYDRFALGYDNNRNHKILRFLYDEESNESSRRTHIDVYDFSSDSWRVLDVNPDCDIPFYQTGVSLKGNTYFFGQEVTQATKVTEIETCLLCFDFTTERFGPCLPLLFYPPCPSFETVTLSWVRDEKLAVLYNHYVTAEIIEIRISTKIEPNAVSWSSFLTVDMSLVNGLPDHFSMYFEAKSFFIDEEKKVVVLFDSKEIKTCRYQMAYIVGDDGYFKSVNIGVSPNSQRKPGRLVCSSYVPSLVQLQD</sequence>
<keyword id="KW-1185">Reference proteome</keyword>
<reference key="1">
    <citation type="journal article" date="2000" name="Nature">
        <title>Sequence and analysis of chromosome 3 of the plant Arabidopsis thaliana.</title>
        <authorList>
            <person name="Salanoubat M."/>
            <person name="Lemcke K."/>
            <person name="Rieger M."/>
            <person name="Ansorge W."/>
            <person name="Unseld M."/>
            <person name="Fartmann B."/>
            <person name="Valle G."/>
            <person name="Bloecker H."/>
            <person name="Perez-Alonso M."/>
            <person name="Obermaier B."/>
            <person name="Delseny M."/>
            <person name="Boutry M."/>
            <person name="Grivell L.A."/>
            <person name="Mache R."/>
            <person name="Puigdomenech P."/>
            <person name="De Simone V."/>
            <person name="Choisne N."/>
            <person name="Artiguenave F."/>
            <person name="Robert C."/>
            <person name="Brottier P."/>
            <person name="Wincker P."/>
            <person name="Cattolico L."/>
            <person name="Weissenbach J."/>
            <person name="Saurin W."/>
            <person name="Quetier F."/>
            <person name="Schaefer M."/>
            <person name="Mueller-Auer S."/>
            <person name="Gabel C."/>
            <person name="Fuchs M."/>
            <person name="Benes V."/>
            <person name="Wurmbach E."/>
            <person name="Drzonek H."/>
            <person name="Erfle H."/>
            <person name="Jordan N."/>
            <person name="Bangert S."/>
            <person name="Wiedelmann R."/>
            <person name="Kranz H."/>
            <person name="Voss H."/>
            <person name="Holland R."/>
            <person name="Brandt P."/>
            <person name="Nyakatura G."/>
            <person name="Vezzi A."/>
            <person name="D'Angelo M."/>
            <person name="Pallavicini A."/>
            <person name="Toppo S."/>
            <person name="Simionati B."/>
            <person name="Conrad A."/>
            <person name="Hornischer K."/>
            <person name="Kauer G."/>
            <person name="Loehnert T.-H."/>
            <person name="Nordsiek G."/>
            <person name="Reichelt J."/>
            <person name="Scharfe M."/>
            <person name="Schoen O."/>
            <person name="Bargues M."/>
            <person name="Terol J."/>
            <person name="Climent J."/>
            <person name="Navarro P."/>
            <person name="Collado C."/>
            <person name="Perez-Perez A."/>
            <person name="Ottenwaelder B."/>
            <person name="Duchemin D."/>
            <person name="Cooke R."/>
            <person name="Laudie M."/>
            <person name="Berger-Llauro C."/>
            <person name="Purnelle B."/>
            <person name="Masuy D."/>
            <person name="de Haan M."/>
            <person name="Maarse A.C."/>
            <person name="Alcaraz J.-P."/>
            <person name="Cottet A."/>
            <person name="Casacuberta E."/>
            <person name="Monfort A."/>
            <person name="Argiriou A."/>
            <person name="Flores M."/>
            <person name="Liguori R."/>
            <person name="Vitale D."/>
            <person name="Mannhaupt G."/>
            <person name="Haase D."/>
            <person name="Schoof H."/>
            <person name="Rudd S."/>
            <person name="Zaccaria P."/>
            <person name="Mewes H.-W."/>
            <person name="Mayer K.F.X."/>
            <person name="Kaul S."/>
            <person name="Town C.D."/>
            <person name="Koo H.L."/>
            <person name="Tallon L.J."/>
            <person name="Jenkins J."/>
            <person name="Rooney T."/>
            <person name="Rizzo M."/>
            <person name="Walts A."/>
            <person name="Utterback T."/>
            <person name="Fujii C.Y."/>
            <person name="Shea T.P."/>
            <person name="Creasy T.H."/>
            <person name="Haas B."/>
            <person name="Maiti R."/>
            <person name="Wu D."/>
            <person name="Peterson J."/>
            <person name="Van Aken S."/>
            <person name="Pai G."/>
            <person name="Militscher J."/>
            <person name="Sellers P."/>
            <person name="Gill J.E."/>
            <person name="Feldblyum T.V."/>
            <person name="Preuss D."/>
            <person name="Lin X."/>
            <person name="Nierman W.C."/>
            <person name="Salzberg S.L."/>
            <person name="White O."/>
            <person name="Venter J.C."/>
            <person name="Fraser C.M."/>
            <person name="Kaneko T."/>
            <person name="Nakamura Y."/>
            <person name="Sato S."/>
            <person name="Kato T."/>
            <person name="Asamizu E."/>
            <person name="Sasamoto S."/>
            <person name="Kimura T."/>
            <person name="Idesawa K."/>
            <person name="Kawashima K."/>
            <person name="Kishida Y."/>
            <person name="Kiyokawa C."/>
            <person name="Kohara M."/>
            <person name="Matsumoto M."/>
            <person name="Matsuno A."/>
            <person name="Muraki A."/>
            <person name="Nakayama S."/>
            <person name="Nakazaki N."/>
            <person name="Shinpo S."/>
            <person name="Takeuchi C."/>
            <person name="Wada T."/>
            <person name="Watanabe A."/>
            <person name="Yamada M."/>
            <person name="Yasuda M."/>
            <person name="Tabata S."/>
        </authorList>
    </citation>
    <scope>NUCLEOTIDE SEQUENCE [LARGE SCALE GENOMIC DNA]</scope>
    <source>
        <strain>cv. Columbia</strain>
    </source>
</reference>
<reference key="2">
    <citation type="journal article" date="2017" name="Plant J.">
        <title>Araport11: a complete reannotation of the Arabidopsis thaliana reference genome.</title>
        <authorList>
            <person name="Cheng C.Y."/>
            <person name="Krishnakumar V."/>
            <person name="Chan A.P."/>
            <person name="Thibaud-Nissen F."/>
            <person name="Schobel S."/>
            <person name="Town C.D."/>
        </authorList>
    </citation>
    <scope>GENOME REANNOTATION</scope>
    <source>
        <strain>cv. Columbia</strain>
    </source>
</reference>
<reference key="3">
    <citation type="journal article" date="2003" name="Science">
        <title>Empirical analysis of transcriptional activity in the Arabidopsis genome.</title>
        <authorList>
            <person name="Yamada K."/>
            <person name="Lim J."/>
            <person name="Dale J.M."/>
            <person name="Chen H."/>
            <person name="Shinn P."/>
            <person name="Palm C.J."/>
            <person name="Southwick A.M."/>
            <person name="Wu H.C."/>
            <person name="Kim C.J."/>
            <person name="Nguyen M."/>
            <person name="Pham P.K."/>
            <person name="Cheuk R.F."/>
            <person name="Karlin-Newmann G."/>
            <person name="Liu S.X."/>
            <person name="Lam B."/>
            <person name="Sakano H."/>
            <person name="Wu T."/>
            <person name="Yu G."/>
            <person name="Miranda M."/>
            <person name="Quach H.L."/>
            <person name="Tripp M."/>
            <person name="Chang C.H."/>
            <person name="Lee J.M."/>
            <person name="Toriumi M.J."/>
            <person name="Chan M.M."/>
            <person name="Tang C.C."/>
            <person name="Onodera C.S."/>
            <person name="Deng J.M."/>
            <person name="Akiyama K."/>
            <person name="Ansari Y."/>
            <person name="Arakawa T."/>
            <person name="Banh J."/>
            <person name="Banno F."/>
            <person name="Bowser L."/>
            <person name="Brooks S.Y."/>
            <person name="Carninci P."/>
            <person name="Chao Q."/>
            <person name="Choy N."/>
            <person name="Enju A."/>
            <person name="Goldsmith A.D."/>
            <person name="Gurjal M."/>
            <person name="Hansen N.F."/>
            <person name="Hayashizaki Y."/>
            <person name="Johnson-Hopson C."/>
            <person name="Hsuan V.W."/>
            <person name="Iida K."/>
            <person name="Karnes M."/>
            <person name="Khan S."/>
            <person name="Koesema E."/>
            <person name="Ishida J."/>
            <person name="Jiang P.X."/>
            <person name="Jones T."/>
            <person name="Kawai J."/>
            <person name="Kamiya A."/>
            <person name="Meyers C."/>
            <person name="Nakajima M."/>
            <person name="Narusaka M."/>
            <person name="Seki M."/>
            <person name="Sakurai T."/>
            <person name="Satou M."/>
            <person name="Tamse R."/>
            <person name="Vaysberg M."/>
            <person name="Wallender E.K."/>
            <person name="Wong C."/>
            <person name="Yamamura Y."/>
            <person name="Yuan S."/>
            <person name="Shinozaki K."/>
            <person name="Davis R.W."/>
            <person name="Theologis A."/>
            <person name="Ecker J.R."/>
        </authorList>
    </citation>
    <scope>NUCLEOTIDE SEQUENCE [LARGE SCALE MRNA]</scope>
    <source>
        <strain>cv. Columbia</strain>
    </source>
</reference>
<reference key="4">
    <citation type="submission" date="2006-07" db="EMBL/GenBank/DDBJ databases">
        <title>Large-scale analysis of RIKEN Arabidopsis full-length (RAFL) cDNAs.</title>
        <authorList>
            <person name="Totoki Y."/>
            <person name="Seki M."/>
            <person name="Ishida J."/>
            <person name="Nakajima M."/>
            <person name="Enju A."/>
            <person name="Kamiya A."/>
            <person name="Narusaka M."/>
            <person name="Shin-i T."/>
            <person name="Nakagawa M."/>
            <person name="Sakamoto N."/>
            <person name="Oishi K."/>
            <person name="Kohara Y."/>
            <person name="Kobayashi M."/>
            <person name="Toyoda A."/>
            <person name="Sakaki Y."/>
            <person name="Sakurai T."/>
            <person name="Iida K."/>
            <person name="Akiyama K."/>
            <person name="Satou M."/>
            <person name="Toyoda T."/>
            <person name="Konagaya A."/>
            <person name="Carninci P."/>
            <person name="Kawai J."/>
            <person name="Hayashizaki Y."/>
            <person name="Shinozaki K."/>
        </authorList>
    </citation>
    <scope>NUCLEOTIDE SEQUENCE [LARGE SCALE MRNA]</scope>
    <source>
        <strain>cv. Columbia</strain>
    </source>
</reference>
<proteinExistence type="evidence at transcript level"/>
<comment type="sequence caution" evidence="2">
    <conflict type="erroneous gene model prediction">
        <sequence resource="EMBL-CDS" id="CAB62455"/>
    </conflict>
</comment>
<feature type="chain" id="PRO_0000283468" description="F-box protein At3g49510">
    <location>
        <begin position="1"/>
        <end position="388"/>
    </location>
</feature>
<feature type="domain" description="F-box" evidence="1">
    <location>
        <begin position="1"/>
        <end position="47"/>
    </location>
</feature>
<organism>
    <name type="scientific">Arabidopsis thaliana</name>
    <name type="common">Mouse-ear cress</name>
    <dbReference type="NCBI Taxonomy" id="3702"/>
    <lineage>
        <taxon>Eukaryota</taxon>
        <taxon>Viridiplantae</taxon>
        <taxon>Streptophyta</taxon>
        <taxon>Embryophyta</taxon>
        <taxon>Tracheophyta</taxon>
        <taxon>Spermatophyta</taxon>
        <taxon>Magnoliopsida</taxon>
        <taxon>eudicotyledons</taxon>
        <taxon>Gunneridae</taxon>
        <taxon>Pentapetalae</taxon>
        <taxon>rosids</taxon>
        <taxon>malvids</taxon>
        <taxon>Brassicales</taxon>
        <taxon>Brassicaceae</taxon>
        <taxon>Camelineae</taxon>
        <taxon>Arabidopsis</taxon>
    </lineage>
</organism>
<evidence type="ECO:0000255" key="1">
    <source>
        <dbReference type="PROSITE-ProRule" id="PRU00080"/>
    </source>
</evidence>
<evidence type="ECO:0000305" key="2"/>